<feature type="signal peptide" evidence="3">
    <location>
        <begin position="1"/>
        <end position="19"/>
    </location>
</feature>
<feature type="chain" id="PRO_5002903376" description="Phospholipase A2 inhibitor alpha-like protein" evidence="6">
    <location>
        <begin position="20"/>
        <end position="167"/>
    </location>
</feature>
<feature type="domain" description="C-type lectin" evidence="2">
    <location>
        <begin position="62"/>
        <end position="163"/>
    </location>
</feature>
<feature type="disulfide bond" evidence="1">
    <location>
        <begin position="83"/>
        <end position="162"/>
    </location>
</feature>
<feature type="disulfide bond" evidence="1">
    <location>
        <begin position="140"/>
        <end position="154"/>
    </location>
</feature>
<keyword id="KW-0903">Direct protein sequencing</keyword>
<keyword id="KW-1015">Disulfide bond</keyword>
<keyword id="KW-0430">Lectin</keyword>
<keyword id="KW-0964">Secreted</keyword>
<keyword id="KW-0732">Signal</keyword>
<accession>C0STK6</accession>
<name>PLIAL_ELACL</name>
<organism>
    <name type="scientific">Elaphe climacophora</name>
    <name type="common">Japanese rat snake</name>
    <name type="synonym">Coluber climacophorus</name>
    <dbReference type="NCBI Taxonomy" id="31143"/>
    <lineage>
        <taxon>Eukaryota</taxon>
        <taxon>Metazoa</taxon>
        <taxon>Chordata</taxon>
        <taxon>Craniata</taxon>
        <taxon>Vertebrata</taxon>
        <taxon>Euteleostomi</taxon>
        <taxon>Lepidosauria</taxon>
        <taxon>Squamata</taxon>
        <taxon>Bifurcata</taxon>
        <taxon>Unidentata</taxon>
        <taxon>Episquamata</taxon>
        <taxon>Toxicofera</taxon>
        <taxon>Serpentes</taxon>
        <taxon>Colubroidea</taxon>
        <taxon>Colubridae</taxon>
        <taxon>Colubrinae</taxon>
        <taxon>Elaphe</taxon>
    </lineage>
</organism>
<comment type="function">
    <text evidence="3">Has no PLA2 inhibitory activity.</text>
</comment>
<comment type="subunit">
    <text evidence="3">Homotrimer.</text>
</comment>
<comment type="subcellular location">
    <subcellularLocation>
        <location evidence="3">Secreted</location>
    </subcellularLocation>
    <text evidence="3">Secreted in plasma.</text>
</comment>
<comment type="miscellaneous">
    <text evidence="3">Concentration of this protein in the serum is 8-fold lower than in the E.quadrivirgata (another non-venomous snake) serum. This difference may reflect the difference in the food habits of these snakes. E.quadrivirgata preys upon snakes including the venomous snakes, whereas E.climacophora only preys upon small mammals and birds.</text>
</comment>
<comment type="similarity">
    <text evidence="5">Belongs to the alpha-type phospholipase A2 inhibitor family.</text>
</comment>
<reference key="1">
    <citation type="journal article" date="2009" name="Toxicon">
        <title>Identification and characterization of phospholipase A2 inhibitors from the serum of the Japanese rat snake, Elaphe climacophora.</title>
        <authorList>
            <person name="Shirai R."/>
            <person name="Toriba M."/>
            <person name="Hayashi K."/>
            <person name="Ikeda K."/>
            <person name="Inoue S."/>
        </authorList>
    </citation>
    <scope>NUCLEOTIDE SEQUENCE [MRNA]</scope>
    <scope>PROTEIN SEQUENCE OF 20-39</scope>
    <scope>FUNCTION</scope>
    <scope>SUBCELLULAR LOCATION</scope>
    <scope>SUBUNIT</scope>
    <source>
        <tissue>Liver</tissue>
        <tissue>Serum</tissue>
    </source>
</reference>
<protein>
    <recommendedName>
        <fullName evidence="4">Phospholipase A2 inhibitor alpha-like protein</fullName>
        <shortName evidence="4">PLI-alpha-LP</shortName>
    </recommendedName>
</protein>
<proteinExistence type="evidence at protein level"/>
<dbReference type="EMBL" id="AB462510">
    <property type="protein sequence ID" value="BAH47548.1"/>
    <property type="molecule type" value="mRNA"/>
</dbReference>
<dbReference type="SMR" id="C0STK6"/>
<dbReference type="GO" id="GO:0005615">
    <property type="term" value="C:extracellular space"/>
    <property type="evidence" value="ECO:0007669"/>
    <property type="project" value="TreeGrafter"/>
</dbReference>
<dbReference type="GO" id="GO:0030246">
    <property type="term" value="F:carbohydrate binding"/>
    <property type="evidence" value="ECO:0007669"/>
    <property type="project" value="UniProtKB-KW"/>
</dbReference>
<dbReference type="GO" id="GO:0008083">
    <property type="term" value="F:growth factor activity"/>
    <property type="evidence" value="ECO:0007669"/>
    <property type="project" value="TreeGrafter"/>
</dbReference>
<dbReference type="GO" id="GO:0001503">
    <property type="term" value="P:ossification"/>
    <property type="evidence" value="ECO:0007669"/>
    <property type="project" value="TreeGrafter"/>
</dbReference>
<dbReference type="Gene3D" id="3.10.100.10">
    <property type="entry name" value="Mannose-Binding Protein A, subunit A"/>
    <property type="match status" value="1"/>
</dbReference>
<dbReference type="InterPro" id="IPR001304">
    <property type="entry name" value="C-type_lectin-like"/>
</dbReference>
<dbReference type="InterPro" id="IPR016186">
    <property type="entry name" value="C-type_lectin-like/link_sf"/>
</dbReference>
<dbReference type="InterPro" id="IPR018378">
    <property type="entry name" value="C-type_lectin_CS"/>
</dbReference>
<dbReference type="InterPro" id="IPR051663">
    <property type="entry name" value="CLec_Tetranectin-domain"/>
</dbReference>
<dbReference type="InterPro" id="IPR016187">
    <property type="entry name" value="CTDL_fold"/>
</dbReference>
<dbReference type="PANTHER" id="PTHR22799:SF1">
    <property type="entry name" value="C-TYPE LECTIN DOMAIN FAMILY 11 MEMBER A"/>
    <property type="match status" value="1"/>
</dbReference>
<dbReference type="PANTHER" id="PTHR22799">
    <property type="entry name" value="TETRANECTIN-RELATED"/>
    <property type="match status" value="1"/>
</dbReference>
<dbReference type="Pfam" id="PF00059">
    <property type="entry name" value="Lectin_C"/>
    <property type="match status" value="1"/>
</dbReference>
<dbReference type="SUPFAM" id="SSF56436">
    <property type="entry name" value="C-type lectin-like"/>
    <property type="match status" value="1"/>
</dbReference>
<dbReference type="PROSITE" id="PS00615">
    <property type="entry name" value="C_TYPE_LECTIN_1"/>
    <property type="match status" value="1"/>
</dbReference>
<dbReference type="PROSITE" id="PS50041">
    <property type="entry name" value="C_TYPE_LECTIN_2"/>
    <property type="match status" value="1"/>
</dbReference>
<evidence type="ECO:0000250" key="1">
    <source>
        <dbReference type="UniProtKB" id="P21755"/>
    </source>
</evidence>
<evidence type="ECO:0000255" key="2">
    <source>
        <dbReference type="PROSITE-ProRule" id="PRU00040"/>
    </source>
</evidence>
<evidence type="ECO:0000269" key="3">
    <source>
    </source>
</evidence>
<evidence type="ECO:0000303" key="4">
    <source>
    </source>
</evidence>
<evidence type="ECO:0000305" key="5"/>
<evidence type="ECO:0000305" key="6">
    <source>
    </source>
</evidence>
<sequence length="167" mass="18201">MQLILLSSLLLLGLSLANGHETDPEGQILNSLVETVSRLEKKIDKVENAFLTVHRARSFGSGSERLYVTNKQVGNFEAVRNTCVQAGGRIPSPQLLNENKAFASVLERHNKAAYLVVQNSAKFTNWAAGEPNNADGNKLCVKADAQGAWHSASCDEDLLVVCEFSFI</sequence>